<gene>
    <name type="primary">rps10</name>
    <name type="synonym">rps10p-1</name>
    <name type="ordered locus">rrnAC2405</name>
</gene>
<accession>P23357</accession>
<accession>Q5UZT4</accession>
<comment type="function">
    <text evidence="1">Involved in the binding of tRNA to the ribosomes.</text>
</comment>
<comment type="subunit">
    <text evidence="1">Part of the 30S ribosomal subunit.</text>
</comment>
<comment type="similarity">
    <text evidence="1 3">Belongs to the universal ribosomal protein uS10 family.</text>
</comment>
<sequence length="103" mass="11557">MSQQARVRLAGTSPEDLDDICADVREIANKTGVELSGPVPLPTKTLEVPSRKSPDGEGTATWEHWEMRVHKRLIDIDADERALRQLMRIQVPNDVSIEIVLED</sequence>
<reference key="1">
    <citation type="journal article" date="1990" name="Nucleic Acids Res.">
        <title>Functional implications related to the gene structure of the elongation factor EF-Tu from Halobacterium marismortui.</title>
        <authorList>
            <person name="Baldacci G."/>
            <person name="Guinet F."/>
            <person name="Tillit J."/>
            <person name="Zaccai G."/>
            <person name="de Recondo A.-M."/>
        </authorList>
    </citation>
    <scope>NUCLEOTIDE SEQUENCE [GENOMIC DNA]</scope>
</reference>
<reference key="2">
    <citation type="journal article" date="2004" name="Genome Res.">
        <title>Genome sequence of Haloarcula marismortui: a halophilic archaeon from the Dead Sea.</title>
        <authorList>
            <person name="Baliga N.S."/>
            <person name="Bonneau R."/>
            <person name="Facciotti M.T."/>
            <person name="Pan M."/>
            <person name="Glusman G."/>
            <person name="Deutsch E.W."/>
            <person name="Shannon P."/>
            <person name="Chiu Y."/>
            <person name="Weng R.S."/>
            <person name="Gan R.R."/>
            <person name="Hung P."/>
            <person name="Date S.V."/>
            <person name="Marcotte E."/>
            <person name="Hood L."/>
            <person name="Ng W.V."/>
        </authorList>
    </citation>
    <scope>NUCLEOTIDE SEQUENCE [LARGE SCALE GENOMIC DNA]</scope>
    <source>
        <strain>ATCC 43049 / DSM 3752 / JCM 8966 / VKM B-1809</strain>
    </source>
</reference>
<evidence type="ECO:0000255" key="1">
    <source>
        <dbReference type="HAMAP-Rule" id="MF_00508"/>
    </source>
</evidence>
<evidence type="ECO:0000256" key="2">
    <source>
        <dbReference type="SAM" id="MobiDB-lite"/>
    </source>
</evidence>
<evidence type="ECO:0000305" key="3"/>
<dbReference type="EMBL" id="X16677">
    <property type="status" value="NOT_ANNOTATED_CDS"/>
    <property type="molecule type" value="Genomic_DNA"/>
</dbReference>
<dbReference type="EMBL" id="AY596297">
    <property type="protein sequence ID" value="AAV47219.1"/>
    <property type="molecule type" value="Genomic_DNA"/>
</dbReference>
<dbReference type="SMR" id="P23357"/>
<dbReference type="STRING" id="272569.rrnAC2405"/>
<dbReference type="PaxDb" id="272569-rrnAC2405"/>
<dbReference type="EnsemblBacteria" id="AAV47219">
    <property type="protein sequence ID" value="AAV47219"/>
    <property type="gene ID" value="rrnAC2405"/>
</dbReference>
<dbReference type="KEGG" id="hma:rrnAC2405"/>
<dbReference type="PATRIC" id="fig|272569.17.peg.3020"/>
<dbReference type="eggNOG" id="arCOG01758">
    <property type="taxonomic scope" value="Archaea"/>
</dbReference>
<dbReference type="HOGENOM" id="CLU_122625_0_1_2"/>
<dbReference type="Proteomes" id="UP000001169">
    <property type="component" value="Chromosome I"/>
</dbReference>
<dbReference type="GO" id="GO:0015935">
    <property type="term" value="C:small ribosomal subunit"/>
    <property type="evidence" value="ECO:0007669"/>
    <property type="project" value="InterPro"/>
</dbReference>
<dbReference type="GO" id="GO:0003735">
    <property type="term" value="F:structural constituent of ribosome"/>
    <property type="evidence" value="ECO:0007669"/>
    <property type="project" value="InterPro"/>
</dbReference>
<dbReference type="GO" id="GO:0000049">
    <property type="term" value="F:tRNA binding"/>
    <property type="evidence" value="ECO:0007669"/>
    <property type="project" value="UniProtKB-UniRule"/>
</dbReference>
<dbReference type="GO" id="GO:0006412">
    <property type="term" value="P:translation"/>
    <property type="evidence" value="ECO:0007669"/>
    <property type="project" value="UniProtKB-UniRule"/>
</dbReference>
<dbReference type="FunFam" id="3.30.70.600:FF:000004">
    <property type="entry name" value="30S ribosomal protein S10"/>
    <property type="match status" value="1"/>
</dbReference>
<dbReference type="Gene3D" id="3.30.70.600">
    <property type="entry name" value="Ribosomal protein S10 domain"/>
    <property type="match status" value="1"/>
</dbReference>
<dbReference type="HAMAP" id="MF_00508">
    <property type="entry name" value="Ribosomal_uS10"/>
    <property type="match status" value="1"/>
</dbReference>
<dbReference type="InterPro" id="IPR001848">
    <property type="entry name" value="Ribosomal_uS10"/>
</dbReference>
<dbReference type="InterPro" id="IPR018268">
    <property type="entry name" value="Ribosomal_uS10_CS"/>
</dbReference>
<dbReference type="InterPro" id="IPR027486">
    <property type="entry name" value="Ribosomal_uS10_dom"/>
</dbReference>
<dbReference type="InterPro" id="IPR036838">
    <property type="entry name" value="Ribosomal_uS10_dom_sf"/>
</dbReference>
<dbReference type="InterPro" id="IPR005729">
    <property type="entry name" value="Ribosomal_uS10_euk/arc"/>
</dbReference>
<dbReference type="NCBIfam" id="TIGR01046">
    <property type="entry name" value="uS10_euk_arch"/>
    <property type="match status" value="1"/>
</dbReference>
<dbReference type="PANTHER" id="PTHR11700">
    <property type="entry name" value="30S RIBOSOMAL PROTEIN S10 FAMILY MEMBER"/>
    <property type="match status" value="1"/>
</dbReference>
<dbReference type="Pfam" id="PF00338">
    <property type="entry name" value="Ribosomal_S10"/>
    <property type="match status" value="1"/>
</dbReference>
<dbReference type="PRINTS" id="PR00971">
    <property type="entry name" value="RIBOSOMALS10"/>
</dbReference>
<dbReference type="SMART" id="SM01403">
    <property type="entry name" value="Ribosomal_S10"/>
    <property type="match status" value="1"/>
</dbReference>
<dbReference type="SUPFAM" id="SSF54999">
    <property type="entry name" value="Ribosomal protein S10"/>
    <property type="match status" value="1"/>
</dbReference>
<dbReference type="PROSITE" id="PS00361">
    <property type="entry name" value="RIBOSOMAL_S10"/>
    <property type="match status" value="1"/>
</dbReference>
<proteinExistence type="inferred from homology"/>
<organism>
    <name type="scientific">Haloarcula marismortui (strain ATCC 43049 / DSM 3752 / JCM 8966 / VKM B-1809)</name>
    <name type="common">Halobacterium marismortui</name>
    <dbReference type="NCBI Taxonomy" id="272569"/>
    <lineage>
        <taxon>Archaea</taxon>
        <taxon>Methanobacteriati</taxon>
        <taxon>Methanobacteriota</taxon>
        <taxon>Stenosarchaea group</taxon>
        <taxon>Halobacteria</taxon>
        <taxon>Halobacteriales</taxon>
        <taxon>Haloarculaceae</taxon>
        <taxon>Haloarcula</taxon>
    </lineage>
</organism>
<name>RS10_HALMA</name>
<keyword id="KW-1185">Reference proteome</keyword>
<keyword id="KW-0687">Ribonucleoprotein</keyword>
<keyword id="KW-0689">Ribosomal protein</keyword>
<feature type="initiator methionine" description="Removed">
    <location>
        <position position="1"/>
    </location>
</feature>
<feature type="chain" id="PRO_0000146643" description="Small ribosomal subunit protein uS10">
    <location>
        <begin position="2"/>
        <end position="103"/>
    </location>
</feature>
<feature type="region of interest" description="Disordered" evidence="2">
    <location>
        <begin position="35"/>
        <end position="59"/>
    </location>
</feature>
<feature type="sequence conflict" description="In Ref. 1." evidence="3" ref="1">
    <original>VLED</original>
    <variation>R</variation>
    <location>
        <begin position="100"/>
        <end position="103"/>
    </location>
</feature>
<protein>
    <recommendedName>
        <fullName evidence="1">Small ribosomal subunit protein uS10</fullName>
    </recommendedName>
    <alternativeName>
        <fullName evidence="3">30S ribosomal protein S10</fullName>
    </alternativeName>
    <alternativeName>
        <fullName>HmaS10</fullName>
    </alternativeName>
</protein>